<proteinExistence type="evidence at protein level"/>
<comment type="function">
    <text evidence="2 6 8 9 10 11 12 16">Regulatory subunit of Kv4/D (Shal)-type voltage-gated rapidly inactivating A-type potassium channels (PubMed:10676964, PubMed:11287421, PubMed:11684073, PubMed:12297301, PubMed:14623880, PubMed:34997220). Modulates channel density, inactivation kinetics and rate of recovery from inactivation in a calcium-dependent and isoform-specific manner (PubMed:10676964, PubMed:11287421, PubMed:11684073, PubMed:12297301, PubMed:14623880, PubMed:34997220). Involved in KCND2 and KCND3 trafficking to the cell surface (PubMed:12829703). May be required for the expression of I(To) currents in the heart (By similarity).</text>
</comment>
<comment type="subunit">
    <text evidence="2 6 8 10 12 13 14 15 16">Component of heteromultimeric potassium channels. Identified in potassium channel complexes containing KCND1, KCND2, KCND3, KCNIP1, KCNIP2, KCNIP3, KCNIP4, DPP6 and DPP10 (By similarity). The KCND2-KCNIP2 channel complex contains four KCND2 and four KCNIP2 subunits (PubMed:14623880, PubMed:14980201). Interacts with KCND2 (PubMed:10676964, PubMed:11287421, PubMed:14623880, PubMed:14980201, PubMed:15356203, PubMed:15358149). Probably part of a complex consisting of KCNIP1, KCNIP2 isoform 3 and KCND2. At least isoform 2 and isoform 3 can self-associate to form homodimers and homotetramers. Isoform 3 interacts with KCNIP1 in a calcium-dependent manner (PubMed:15358149). Interacts with KCND3; each KCNIP2 monomer interacts with two adjacent KCND3 subunits, through both the N-terminal inactivation ball of a KCND3 subunit and a C-terminal helix from the adjacent KCND3 subunit, clamping them together; this interaction modulates the channel gating kinetics (PubMed:12297301, PubMed:34997220).</text>
</comment>
<comment type="interaction">
    <interactant intactId="EBI-1052975">
        <id>Q9NS61</id>
    </interactant>
    <interactant intactId="EBI-1646745">
        <id>Q9NZV8</id>
        <label>KCND2</label>
    </interactant>
    <organismsDiffer>false</organismsDiffer>
    <experiments>3</experiments>
</comment>
<comment type="interaction">
    <interactant intactId="EBI-1053003">
        <id>Q9NS61-2</id>
    </interactant>
    <interactant intactId="EBI-4403685">
        <id>Q7Z5G4</id>
        <label>GOLGA7</label>
    </interactant>
    <organismsDiffer>false</organismsDiffer>
    <experiments>3</experiments>
</comment>
<comment type="interaction">
    <interactant intactId="EBI-1053003">
        <id>Q9NS61-2</id>
    </interactant>
    <interactant intactId="EBI-5235340">
        <id>Q7Z699</id>
        <label>SPRED1</label>
    </interactant>
    <organismsDiffer>false</organismsDiffer>
    <experiments>3</experiments>
</comment>
<comment type="interaction">
    <interactant intactId="EBI-1053010">
        <id>Q9NS61-3</id>
    </interactant>
    <interactant intactId="EBI-1646745">
        <id>Q9NZV8</id>
        <label>KCND2</label>
    </interactant>
    <organismsDiffer>false</organismsDiffer>
    <experiments>3</experiments>
</comment>
<comment type="interaction">
    <interactant intactId="EBI-1053010">
        <id>Q9NS61-3</id>
    </interactant>
    <interactant intactId="EBI-2120635">
        <id>Q9NZI2</id>
        <label>KCNIP1</label>
    </interactant>
    <organismsDiffer>false</organismsDiffer>
    <experiments>4</experiments>
</comment>
<comment type="interaction">
    <interactant intactId="EBI-1053010">
        <id>Q9NS61-3</id>
    </interactant>
    <interactant intactId="EBI-1053010">
        <id>Q9NS61-3</id>
        <label>KCNIP2</label>
    </interactant>
    <organismsDiffer>false</organismsDiffer>
    <experiments>2</experiments>
</comment>
<comment type="subcellular location">
    <molecule>Isoform 1</molecule>
    <subcellularLocation>
        <location evidence="3">Cell membrane</location>
        <topology evidence="3">Lipid-anchor</topology>
    </subcellularLocation>
    <text evidence="3">Detected on lipid rafts (By similarity).</text>
</comment>
<comment type="subcellular location">
    <molecule>Isoform 2</molecule>
    <subcellularLocation>
        <location evidence="3">Cell membrane</location>
        <topology evidence="3">Lipid-anchor</topology>
    </subcellularLocation>
</comment>
<comment type="subcellular location">
    <molecule>Isoform 6</molecule>
    <subcellularLocation>
        <location evidence="3">Cell membrane</location>
        <topology evidence="3">Lipid-anchor</topology>
    </subcellularLocation>
</comment>
<comment type="alternative products">
    <event type="alternative splicing"/>
    <isoform>
        <id>Q9NS61-1</id>
        <name>1</name>
        <name>KChIP2a</name>
        <name>KChIP2b</name>
        <name>KCHIP2.4</name>
        <name>KCHIP2L</name>
        <sequence type="displayed"/>
    </isoform>
    <isoform>
        <id>Q9NS61-2</id>
        <name>2</name>
        <name>3</name>
        <name>KChIP2.1</name>
        <name>KChIP2b</name>
        <sequence type="described" ref="VSP_015052"/>
    </isoform>
    <isoform>
        <id>Q9NS61-3</id>
        <name>3</name>
        <name>2</name>
        <name>KChIP2.2</name>
        <name>KChIP2c</name>
        <name>KCHIP2S</name>
        <sequence type="described" ref="VSP_015051"/>
    </isoform>
    <isoform>
        <id>Q9NS61-4</id>
        <name>4</name>
        <sequence type="described" ref="VSP_015050"/>
    </isoform>
    <isoform>
        <id>Q9NS61-5</id>
        <name>5</name>
        <sequence type="described" ref="VSP_015051 VSP_015056"/>
    </isoform>
    <isoform>
        <id>Q9NS61-6</id>
        <name>6</name>
        <name>KCHIP4.2</name>
        <sequence type="described" ref="VSP_015053"/>
    </isoform>
    <isoform>
        <id>Q9NS61-7</id>
        <name>7</name>
        <sequence type="described" ref="VSP_015051 VSP_015055"/>
    </isoform>
    <isoform>
        <id>Q9NS61-8</id>
        <name>8</name>
        <name>KCHIP2.6</name>
        <sequence type="described" ref="VSP_015049 VSP_015054"/>
    </isoform>
    <isoform>
        <id>Q9NS61-9</id>
        <name>9</name>
        <name>KCHIP2.5</name>
        <sequence type="described" ref="VSP_015051 VSP_015057 VSP_015058"/>
    </isoform>
</comment>
<comment type="tissue specificity">
    <text evidence="7 9 14">Expressed in brain. Colocalizes with KCND2 in excitatory neurons including cortical and hippocampal CA1 pyramidal cells. Isoform 3 is expressed in heart and in umbilical vein endothelial cells. Not expressed in fetal heart.</text>
</comment>
<comment type="PTM">
    <text evidence="3">Palmitoylated. Palmitoylation enhances association with the plasma membrane.</text>
</comment>
<comment type="similarity">
    <text evidence="28">Belongs to the recoverin family.</text>
</comment>
<name>KCIP2_HUMAN</name>
<keyword id="KW-0002">3D-structure</keyword>
<keyword id="KW-0025">Alternative splicing</keyword>
<keyword id="KW-0106">Calcium</keyword>
<keyword id="KW-1003">Cell membrane</keyword>
<keyword id="KW-0407">Ion channel</keyword>
<keyword id="KW-0406">Ion transport</keyword>
<keyword id="KW-0449">Lipoprotein</keyword>
<keyword id="KW-0472">Membrane</keyword>
<keyword id="KW-0479">Metal-binding</keyword>
<keyword id="KW-0564">Palmitate</keyword>
<keyword id="KW-0597">Phosphoprotein</keyword>
<keyword id="KW-0630">Potassium</keyword>
<keyword id="KW-0631">Potassium channel</keyword>
<keyword id="KW-0633">Potassium transport</keyword>
<keyword id="KW-1267">Proteomics identification</keyword>
<keyword id="KW-1185">Reference proteome</keyword>
<keyword id="KW-0677">Repeat</keyword>
<keyword id="KW-0813">Transport</keyword>
<keyword id="KW-0851">Voltage-gated channel</keyword>
<sequence length="270" mass="30907">MRGQGRKESLSDSRDLDGSYDQLTGHPPGPTKKALKQRFLKLLPCCGPQALPSVSETLAAPASLRPHRPRLLDPDSVDDEFELSTVCHRPEGLEQLQEQTKFTRKELQVLYRGFKNECPSGIVNEENFKQIYSQFFPQGDSSTYATFLFNAFDTNHDGSVSFEDFVAGLSVILRGTVDDRLNWAFNLYDLNKDGCITKEEMLDIMKSIYDMMGKYTYPALREEAPREHVESFFQKMDRNKDGVVTIEEFIESCQKDENIMRSMQLFDNVI</sequence>
<protein>
    <recommendedName>
        <fullName evidence="28">A-type potassium channel modulatory protein KCNIP2</fullName>
    </recommendedName>
    <alternativeName>
        <fullName>Cardiac voltage-gated potassium channel modulatory subunit</fullName>
    </alternativeName>
    <alternativeName>
        <fullName>Kv channel-interacting protein 2</fullName>
        <shortName evidence="21">KChIP2</shortName>
    </alternativeName>
    <alternativeName>
        <fullName>Potassium channel-interacting protein 2</fullName>
    </alternativeName>
</protein>
<organism>
    <name type="scientific">Homo sapiens</name>
    <name type="common">Human</name>
    <dbReference type="NCBI Taxonomy" id="9606"/>
    <lineage>
        <taxon>Eukaryota</taxon>
        <taxon>Metazoa</taxon>
        <taxon>Chordata</taxon>
        <taxon>Craniata</taxon>
        <taxon>Vertebrata</taxon>
        <taxon>Euteleostomi</taxon>
        <taxon>Mammalia</taxon>
        <taxon>Eutheria</taxon>
        <taxon>Euarchontoglires</taxon>
        <taxon>Primates</taxon>
        <taxon>Haplorrhini</taxon>
        <taxon>Catarrhini</taxon>
        <taxon>Hominidae</taxon>
        <taxon>Homo</taxon>
    </lineage>
</organism>
<dbReference type="EMBL" id="AF199598">
    <property type="protein sequence ID" value="AAF33683.1"/>
    <property type="molecule type" value="mRNA"/>
</dbReference>
<dbReference type="EMBL" id="AB044584">
    <property type="protein sequence ID" value="BAA96740.1"/>
    <property type="molecule type" value="mRNA"/>
</dbReference>
<dbReference type="EMBL" id="AB044585">
    <property type="protein sequence ID" value="BAA96741.1"/>
    <property type="molecule type" value="mRNA"/>
</dbReference>
<dbReference type="EMBL" id="AY026328">
    <property type="protein sequence ID" value="AAK07674.1"/>
    <property type="molecule type" value="mRNA"/>
</dbReference>
<dbReference type="EMBL" id="AY026331">
    <property type="protein sequence ID" value="AAK21972.1"/>
    <property type="molecule type" value="Genomic_DNA"/>
</dbReference>
<dbReference type="EMBL" id="AY026329">
    <property type="protein sequence ID" value="AAK21972.1"/>
    <property type="status" value="JOINED"/>
    <property type="molecule type" value="Genomic_DNA"/>
</dbReference>
<dbReference type="EMBL" id="AY026330">
    <property type="protein sequence ID" value="AAK21972.1"/>
    <property type="status" value="JOINED"/>
    <property type="molecule type" value="Genomic_DNA"/>
</dbReference>
<dbReference type="EMBL" id="AF347114">
    <property type="protein sequence ID" value="AAK70356.1"/>
    <property type="molecule type" value="mRNA"/>
</dbReference>
<dbReference type="EMBL" id="AF295076">
    <property type="protein sequence ID" value="AAG02120.1"/>
    <property type="molecule type" value="mRNA"/>
</dbReference>
<dbReference type="EMBL" id="AF295530">
    <property type="protein sequence ID" value="AAG02121.1"/>
    <property type="molecule type" value="mRNA"/>
</dbReference>
<dbReference type="EMBL" id="AF367018">
    <property type="protein sequence ID" value="AAK53707.1"/>
    <property type="molecule type" value="mRNA"/>
</dbReference>
<dbReference type="EMBL" id="AF367019">
    <property type="protein sequence ID" value="AAK53708.1"/>
    <property type="molecule type" value="mRNA"/>
</dbReference>
<dbReference type="EMBL" id="AF367020">
    <property type="protein sequence ID" value="AAK53709.1"/>
    <property type="molecule type" value="mRNA"/>
</dbReference>
<dbReference type="EMBL" id="AF367021">
    <property type="protein sequence ID" value="AAK53710.1"/>
    <property type="molecule type" value="mRNA"/>
</dbReference>
<dbReference type="EMBL" id="DQ148480">
    <property type="protein sequence ID" value="AAZ77797.1"/>
    <property type="molecule type" value="mRNA"/>
</dbReference>
<dbReference type="EMBL" id="DQ148481">
    <property type="protein sequence ID" value="AAZ77798.1"/>
    <property type="molecule type" value="mRNA"/>
</dbReference>
<dbReference type="EMBL" id="DQ148483">
    <property type="protein sequence ID" value="AAZ77800.1"/>
    <property type="molecule type" value="mRNA"/>
</dbReference>
<dbReference type="EMBL" id="AL136722">
    <property type="protein sequence ID" value="CAB66656.1"/>
    <property type="molecule type" value="mRNA"/>
</dbReference>
<dbReference type="EMBL" id="AY302141">
    <property type="protein sequence ID" value="AAP57633.1"/>
    <property type="molecule type" value="mRNA"/>
</dbReference>
<dbReference type="EMBL" id="AK027347">
    <property type="protein sequence ID" value="BAB55052.1"/>
    <property type="molecule type" value="mRNA"/>
</dbReference>
<dbReference type="EMBL" id="AK315042">
    <property type="protein sequence ID" value="BAG37523.1"/>
    <property type="molecule type" value="mRNA"/>
</dbReference>
<dbReference type="EMBL" id="AC010789">
    <property type="status" value="NOT_ANNOTATED_CDS"/>
    <property type="molecule type" value="Genomic_DNA"/>
</dbReference>
<dbReference type="EMBL" id="CH471066">
    <property type="protein sequence ID" value="EAW49733.1"/>
    <property type="molecule type" value="Genomic_DNA"/>
</dbReference>
<dbReference type="EMBL" id="BC034685">
    <property type="protein sequence ID" value="AAH34685.1"/>
    <property type="molecule type" value="mRNA"/>
</dbReference>
<dbReference type="EMBL" id="AJ276317">
    <property type="protein sequence ID" value="CAB77054.1"/>
    <property type="molecule type" value="mRNA"/>
</dbReference>
<dbReference type="CCDS" id="CCDS41562.1">
    <molecule id="Q9NS61-2"/>
</dbReference>
<dbReference type="CCDS" id="CCDS7521.1">
    <molecule id="Q9NS61-6"/>
</dbReference>
<dbReference type="CCDS" id="CCDS7522.1">
    <molecule id="Q9NS61-1"/>
</dbReference>
<dbReference type="CCDS" id="CCDS7523.1">
    <molecule id="Q9NS61-7"/>
</dbReference>
<dbReference type="CCDS" id="CCDS7524.1">
    <molecule id="Q9NS61-3"/>
</dbReference>
<dbReference type="CCDS" id="CCDS7525.1">
    <molecule id="Q9NS61-4"/>
</dbReference>
<dbReference type="CCDS" id="CCDS7526.1">
    <molecule id="Q9NS61-9"/>
</dbReference>
<dbReference type="RefSeq" id="NP_055406.2">
    <molecule id="Q9NS61-6"/>
    <property type="nucleotide sequence ID" value="NM_014591.4"/>
</dbReference>
<dbReference type="RefSeq" id="NP_775283.1">
    <molecule id="Q9NS61-1"/>
    <property type="nucleotide sequence ID" value="NM_173191.3"/>
</dbReference>
<dbReference type="RefSeq" id="NP_775284.1">
    <molecule id="Q9NS61-2"/>
    <property type="nucleotide sequence ID" value="NM_173192.3"/>
</dbReference>
<dbReference type="RefSeq" id="NP_775285.1">
    <molecule id="Q9NS61-7"/>
    <property type="nucleotide sequence ID" value="NM_173193.3"/>
</dbReference>
<dbReference type="RefSeq" id="NP_775286.1">
    <molecule id="Q9NS61-4"/>
    <property type="nucleotide sequence ID" value="NM_173194.3"/>
</dbReference>
<dbReference type="RefSeq" id="NP_775287.1">
    <molecule id="Q9NS61-3"/>
    <property type="nucleotide sequence ID" value="NM_173195.3"/>
</dbReference>
<dbReference type="RefSeq" id="NP_775289.1">
    <molecule id="Q9NS61-9"/>
    <property type="nucleotide sequence ID" value="NM_173197.3"/>
</dbReference>
<dbReference type="PDB" id="7UKH">
    <property type="method" value="EM"/>
    <property type="resolution" value="2.33 A"/>
    <property type="chains" value="I/J/K/L=1-270"/>
</dbReference>
<dbReference type="PDB" id="7W6S">
    <property type="method" value="EM"/>
    <property type="resolution" value="2.80 A"/>
    <property type="chains" value="A/C/E/G=1-270"/>
</dbReference>
<dbReference type="PDBsum" id="7UKH"/>
<dbReference type="PDBsum" id="7W6S"/>
<dbReference type="EMDB" id="EMD-26581"/>
<dbReference type="EMDB" id="EMD-32334"/>
<dbReference type="SMR" id="Q9NS61"/>
<dbReference type="BioGRID" id="119043">
    <property type="interactions" value="15"/>
</dbReference>
<dbReference type="ComplexPortal" id="CPX-3239">
    <property type="entry name" value="Kv4.2-KChIP2 channel complex"/>
</dbReference>
<dbReference type="FunCoup" id="Q9NS61">
    <property type="interactions" value="198"/>
</dbReference>
<dbReference type="IntAct" id="Q9NS61">
    <property type="interactions" value="10"/>
</dbReference>
<dbReference type="STRING" id="9606.ENSP00000420040"/>
<dbReference type="BindingDB" id="Q9NS61"/>
<dbReference type="ChEMBL" id="CHEMBL2189164"/>
<dbReference type="TCDB" id="8.A.82.2.4">
    <property type="family name" value="the calmodulin calcium binding protein (calmodulin) family"/>
</dbReference>
<dbReference type="iPTMnet" id="Q9NS61"/>
<dbReference type="PhosphoSitePlus" id="Q9NS61"/>
<dbReference type="SwissPalm" id="Q9NS61"/>
<dbReference type="BioMuta" id="KCNIP2"/>
<dbReference type="DMDM" id="338817979"/>
<dbReference type="MassIVE" id="Q9NS61"/>
<dbReference type="PaxDb" id="9606-ENSP00000420040"/>
<dbReference type="PeptideAtlas" id="Q9NS61"/>
<dbReference type="ProteomicsDB" id="82483">
    <molecule id="Q9NS61-1"/>
</dbReference>
<dbReference type="ProteomicsDB" id="82484">
    <molecule id="Q9NS61-2"/>
</dbReference>
<dbReference type="ProteomicsDB" id="82485">
    <molecule id="Q9NS61-3"/>
</dbReference>
<dbReference type="ProteomicsDB" id="82486">
    <molecule id="Q9NS61-4"/>
</dbReference>
<dbReference type="ProteomicsDB" id="82487">
    <molecule id="Q9NS61-5"/>
</dbReference>
<dbReference type="ProteomicsDB" id="82488">
    <molecule id="Q9NS61-6"/>
</dbReference>
<dbReference type="ProteomicsDB" id="82489">
    <molecule id="Q9NS61-7"/>
</dbReference>
<dbReference type="ProteomicsDB" id="82490">
    <molecule id="Q9NS61-8"/>
</dbReference>
<dbReference type="ProteomicsDB" id="82491">
    <molecule id="Q9NS61-9"/>
</dbReference>
<dbReference type="ABCD" id="Q9NS61">
    <property type="antibodies" value="2 sequenced antibodies"/>
</dbReference>
<dbReference type="Antibodypedia" id="17919">
    <property type="antibodies" value="451 antibodies from 30 providers"/>
</dbReference>
<dbReference type="DNASU" id="30819"/>
<dbReference type="Ensembl" id="ENST00000239117.3">
    <molecule id="Q9NS61-9"/>
    <property type="protein sequence ID" value="ENSP00000239117.3"/>
    <property type="gene ID" value="ENSG00000120049.20"/>
</dbReference>
<dbReference type="Ensembl" id="ENST00000343195.8">
    <molecule id="Q9NS61-3"/>
    <property type="protein sequence ID" value="ENSP00000344169.4"/>
    <property type="gene ID" value="ENSG00000120049.20"/>
</dbReference>
<dbReference type="Ensembl" id="ENST00000348850.9">
    <molecule id="Q9NS61-4"/>
    <property type="protein sequence ID" value="ENSP00000239118.6"/>
    <property type="gene ID" value="ENSG00000120049.20"/>
</dbReference>
<dbReference type="Ensembl" id="ENST00000353068.7">
    <molecule id="Q9NS61-7"/>
    <property type="protein sequence ID" value="ENSP00000341624.3"/>
    <property type="gene ID" value="ENSG00000120049.20"/>
</dbReference>
<dbReference type="Ensembl" id="ENST00000356640.7">
    <molecule id="Q9NS61-1"/>
    <property type="protein sequence ID" value="ENSP00000349055.2"/>
    <property type="gene ID" value="ENSG00000120049.20"/>
</dbReference>
<dbReference type="Ensembl" id="ENST00000358038.7">
    <molecule id="Q9NS61-2"/>
    <property type="protein sequence ID" value="ENSP00000350733.3"/>
    <property type="gene ID" value="ENSG00000120049.20"/>
</dbReference>
<dbReference type="Ensembl" id="ENST00000434163.5">
    <molecule id="Q9NS61-8"/>
    <property type="protein sequence ID" value="ENSP00000411679.1"/>
    <property type="gene ID" value="ENSG00000120049.20"/>
</dbReference>
<dbReference type="Ensembl" id="ENST00000461105.5">
    <molecule id="Q9NS61-6"/>
    <property type="protein sequence ID" value="ENSP00000420040.1"/>
    <property type="gene ID" value="ENSG00000120049.20"/>
</dbReference>
<dbReference type="GeneID" id="30819"/>
<dbReference type="KEGG" id="hsa:30819"/>
<dbReference type="MANE-Select" id="ENST00000356640.7">
    <property type="protein sequence ID" value="ENSP00000349055.2"/>
    <property type="RefSeq nucleotide sequence ID" value="NM_173191.3"/>
    <property type="RefSeq protein sequence ID" value="NP_775283.1"/>
</dbReference>
<dbReference type="UCSC" id="uc001ktz.4">
    <molecule id="Q9NS61-1"/>
    <property type="organism name" value="human"/>
</dbReference>
<dbReference type="AGR" id="HGNC:15522"/>
<dbReference type="CTD" id="30819"/>
<dbReference type="DisGeNET" id="30819"/>
<dbReference type="GeneCards" id="KCNIP2"/>
<dbReference type="HGNC" id="HGNC:15522">
    <property type="gene designation" value="KCNIP2"/>
</dbReference>
<dbReference type="HPA" id="ENSG00000120049">
    <property type="expression patterns" value="Tissue enhanced (adipose tissue, brain, heart muscle)"/>
</dbReference>
<dbReference type="MIM" id="604661">
    <property type="type" value="gene"/>
</dbReference>
<dbReference type="neXtProt" id="NX_Q9NS61"/>
<dbReference type="OpenTargets" id="ENSG00000120049"/>
<dbReference type="PharmGKB" id="PA30042"/>
<dbReference type="VEuPathDB" id="HostDB:ENSG00000120049"/>
<dbReference type="eggNOG" id="KOG0044">
    <property type="taxonomic scope" value="Eukaryota"/>
</dbReference>
<dbReference type="GeneTree" id="ENSGT00940000157798"/>
<dbReference type="HOGENOM" id="CLU_1517380_0_0_1"/>
<dbReference type="InParanoid" id="Q9NS61"/>
<dbReference type="OMA" id="CQQRCKK"/>
<dbReference type="OrthoDB" id="191686at2759"/>
<dbReference type="PAN-GO" id="Q9NS61">
    <property type="GO annotations" value="4 GO annotations based on evolutionary models"/>
</dbReference>
<dbReference type="TreeFam" id="TF318560"/>
<dbReference type="PathwayCommons" id="Q9NS61"/>
<dbReference type="Reactome" id="R-HSA-5576894">
    <property type="pathway name" value="Phase 1 - inactivation of fast Na+ channels"/>
</dbReference>
<dbReference type="SignaLink" id="Q9NS61"/>
<dbReference type="BioGRID-ORCS" id="30819">
    <property type="hits" value="15 hits in 1156 CRISPR screens"/>
</dbReference>
<dbReference type="ChiTaRS" id="KCNIP2">
    <property type="organism name" value="human"/>
</dbReference>
<dbReference type="GeneWiki" id="KCNIP2"/>
<dbReference type="GenomeRNAi" id="30819"/>
<dbReference type="Pharos" id="Q9NS61">
    <property type="development level" value="Tbio"/>
</dbReference>
<dbReference type="PRO" id="PR:Q9NS61"/>
<dbReference type="Proteomes" id="UP000005640">
    <property type="component" value="Chromosome 10"/>
</dbReference>
<dbReference type="RNAct" id="Q9NS61">
    <property type="molecule type" value="protein"/>
</dbReference>
<dbReference type="Bgee" id="ENSG00000120049">
    <property type="expression patterns" value="Expressed in apex of heart and 136 other cell types or tissues"/>
</dbReference>
<dbReference type="ExpressionAtlas" id="Q9NS61">
    <property type="expression patterns" value="baseline and differential"/>
</dbReference>
<dbReference type="GO" id="GO:0005737">
    <property type="term" value="C:cytoplasm"/>
    <property type="evidence" value="ECO:0000314"/>
    <property type="project" value="UniProtKB"/>
</dbReference>
<dbReference type="GO" id="GO:0030425">
    <property type="term" value="C:dendrite"/>
    <property type="evidence" value="ECO:0007669"/>
    <property type="project" value="Ensembl"/>
</dbReference>
<dbReference type="GO" id="GO:0071193">
    <property type="term" value="C:Kv4.2-KChIP2 channel complex"/>
    <property type="evidence" value="ECO:0000353"/>
    <property type="project" value="ComplexPortal"/>
</dbReference>
<dbReference type="GO" id="GO:0005886">
    <property type="term" value="C:plasma membrane"/>
    <property type="evidence" value="ECO:0000304"/>
    <property type="project" value="Reactome"/>
</dbReference>
<dbReference type="GO" id="GO:0045202">
    <property type="term" value="C:synapse"/>
    <property type="evidence" value="ECO:0007669"/>
    <property type="project" value="GOC"/>
</dbReference>
<dbReference type="GO" id="GO:0008076">
    <property type="term" value="C:voltage-gated potassium channel complex"/>
    <property type="evidence" value="ECO:0000314"/>
    <property type="project" value="BHF-UCL"/>
</dbReference>
<dbReference type="GO" id="GO:0005509">
    <property type="term" value="F:calcium ion binding"/>
    <property type="evidence" value="ECO:0000318"/>
    <property type="project" value="GO_Central"/>
</dbReference>
<dbReference type="GO" id="GO:0046923">
    <property type="term" value="F:ER retention sequence binding"/>
    <property type="evidence" value="ECO:0000303"/>
    <property type="project" value="UniProtKB"/>
</dbReference>
<dbReference type="GO" id="GO:0042802">
    <property type="term" value="F:identical protein binding"/>
    <property type="evidence" value="ECO:0000353"/>
    <property type="project" value="IntAct"/>
</dbReference>
<dbReference type="GO" id="GO:0005267">
    <property type="term" value="F:potassium channel activity"/>
    <property type="evidence" value="ECO:0007669"/>
    <property type="project" value="UniProtKB-KW"/>
</dbReference>
<dbReference type="GO" id="GO:0015459">
    <property type="term" value="F:potassium channel regulator activity"/>
    <property type="evidence" value="ECO:0000314"/>
    <property type="project" value="BHF-UCL"/>
</dbReference>
<dbReference type="GO" id="GO:0044877">
    <property type="term" value="F:protein-containing complex binding"/>
    <property type="evidence" value="ECO:0007669"/>
    <property type="project" value="Ensembl"/>
</dbReference>
<dbReference type="GO" id="GO:0044325">
    <property type="term" value="F:transmembrane transporter binding"/>
    <property type="evidence" value="ECO:0000353"/>
    <property type="project" value="BHF-UCL"/>
</dbReference>
<dbReference type="GO" id="GO:0001508">
    <property type="term" value="P:action potential"/>
    <property type="evidence" value="ECO:0000314"/>
    <property type="project" value="ComplexPortal"/>
</dbReference>
<dbReference type="GO" id="GO:0007268">
    <property type="term" value="P:chemical synaptic transmission"/>
    <property type="evidence" value="ECO:0000304"/>
    <property type="project" value="ProtInc"/>
</dbReference>
<dbReference type="GO" id="GO:0045163">
    <property type="term" value="P:clustering of voltage-gated potassium channels"/>
    <property type="evidence" value="ECO:0000314"/>
    <property type="project" value="UniProtKB"/>
</dbReference>
<dbReference type="GO" id="GO:0005513">
    <property type="term" value="P:detection of calcium ion"/>
    <property type="evidence" value="ECO:0000304"/>
    <property type="project" value="ProtInc"/>
</dbReference>
<dbReference type="GO" id="GO:0086009">
    <property type="term" value="P:membrane repolarization"/>
    <property type="evidence" value="ECO:0000314"/>
    <property type="project" value="ComplexPortal"/>
</dbReference>
<dbReference type="GO" id="GO:0086013">
    <property type="term" value="P:membrane repolarization during cardiac muscle cell action potential"/>
    <property type="evidence" value="ECO:0000304"/>
    <property type="project" value="BHF-UCL"/>
</dbReference>
<dbReference type="GO" id="GO:0006936">
    <property type="term" value="P:muscle contraction"/>
    <property type="evidence" value="ECO:0000314"/>
    <property type="project" value="ComplexPortal"/>
</dbReference>
<dbReference type="GO" id="GO:1903766">
    <property type="term" value="P:positive regulation of potassium ion export across plasma membrane"/>
    <property type="evidence" value="ECO:0000314"/>
    <property type="project" value="BHF-UCL"/>
</dbReference>
<dbReference type="GO" id="GO:0006813">
    <property type="term" value="P:potassium ion transport"/>
    <property type="evidence" value="ECO:0000304"/>
    <property type="project" value="UniProtKB"/>
</dbReference>
<dbReference type="GO" id="GO:0008016">
    <property type="term" value="P:regulation of heart contraction"/>
    <property type="evidence" value="ECO:0000304"/>
    <property type="project" value="UniProtKB"/>
</dbReference>
<dbReference type="GO" id="GO:0060306">
    <property type="term" value="P:regulation of membrane repolarization"/>
    <property type="evidence" value="ECO:0000314"/>
    <property type="project" value="BHF-UCL"/>
</dbReference>
<dbReference type="GO" id="GO:1903764">
    <property type="term" value="P:regulation of potassium ion export across plasma membrane"/>
    <property type="evidence" value="ECO:0000314"/>
    <property type="project" value="BHF-UCL"/>
</dbReference>
<dbReference type="GO" id="GO:1901379">
    <property type="term" value="P:regulation of potassium ion transmembrane transport"/>
    <property type="evidence" value="ECO:0000314"/>
    <property type="project" value="BHF-UCL"/>
</dbReference>
<dbReference type="GO" id="GO:0009966">
    <property type="term" value="P:regulation of signal transduction"/>
    <property type="evidence" value="ECO:0000318"/>
    <property type="project" value="GO_Central"/>
</dbReference>
<dbReference type="GO" id="GO:0007165">
    <property type="term" value="P:signal transduction"/>
    <property type="evidence" value="ECO:0000304"/>
    <property type="project" value="ProtInc"/>
</dbReference>
<dbReference type="CDD" id="cd00051">
    <property type="entry name" value="EFh"/>
    <property type="match status" value="2"/>
</dbReference>
<dbReference type="FunFam" id="1.10.238.10:FF:000043">
    <property type="entry name" value="Kv channel-interacting protein 1 isoform 2"/>
    <property type="match status" value="1"/>
</dbReference>
<dbReference type="Gene3D" id="1.10.238.10">
    <property type="entry name" value="EF-hand"/>
    <property type="match status" value="1"/>
</dbReference>
<dbReference type="InterPro" id="IPR011992">
    <property type="entry name" value="EF-hand-dom_pair"/>
</dbReference>
<dbReference type="InterPro" id="IPR018247">
    <property type="entry name" value="EF_Hand_1_Ca_BS"/>
</dbReference>
<dbReference type="InterPro" id="IPR002048">
    <property type="entry name" value="EF_hand_dom"/>
</dbReference>
<dbReference type="InterPro" id="IPR028846">
    <property type="entry name" value="Recoverin"/>
</dbReference>
<dbReference type="PANTHER" id="PTHR23055">
    <property type="entry name" value="CALCIUM BINDING PROTEINS"/>
    <property type="match status" value="1"/>
</dbReference>
<dbReference type="PANTHER" id="PTHR23055:SF65">
    <property type="entry name" value="KV CHANNEL-INTERACTING PROTEIN 2"/>
    <property type="match status" value="1"/>
</dbReference>
<dbReference type="Pfam" id="PF13499">
    <property type="entry name" value="EF-hand_7"/>
    <property type="match status" value="1"/>
</dbReference>
<dbReference type="Pfam" id="PF13833">
    <property type="entry name" value="EF-hand_8"/>
    <property type="match status" value="1"/>
</dbReference>
<dbReference type="PRINTS" id="PR00450">
    <property type="entry name" value="RECOVERIN"/>
</dbReference>
<dbReference type="SMART" id="SM00054">
    <property type="entry name" value="EFh"/>
    <property type="match status" value="3"/>
</dbReference>
<dbReference type="SUPFAM" id="SSF47473">
    <property type="entry name" value="EF-hand"/>
    <property type="match status" value="1"/>
</dbReference>
<dbReference type="PROSITE" id="PS00018">
    <property type="entry name" value="EF_HAND_1"/>
    <property type="match status" value="3"/>
</dbReference>
<dbReference type="PROSITE" id="PS50222">
    <property type="entry name" value="EF_HAND_2"/>
    <property type="match status" value="3"/>
</dbReference>
<feature type="chain" id="PRO_0000073821" description="A-type potassium channel modulatory protein KCNIP2">
    <location>
        <begin position="1"/>
        <end position="270"/>
    </location>
</feature>
<feature type="domain" description="EF-hand 1; degenerate" evidence="28">
    <location>
        <begin position="81"/>
        <end position="137"/>
    </location>
</feature>
<feature type="domain" description="EF-hand 2" evidence="4">
    <location>
        <begin position="140"/>
        <end position="175"/>
    </location>
</feature>
<feature type="domain" description="EF-hand 3" evidence="4">
    <location>
        <begin position="176"/>
        <end position="211"/>
    </location>
</feature>
<feature type="domain" description="EF-hand 4" evidence="4">
    <location>
        <begin position="224"/>
        <end position="259"/>
    </location>
</feature>
<feature type="region of interest" description="Disordered" evidence="5">
    <location>
        <begin position="1"/>
        <end position="32"/>
    </location>
</feature>
<feature type="region of interest" description="Interaction with KCND2" evidence="1">
    <location>
        <begin position="257"/>
        <end position="270"/>
    </location>
</feature>
<feature type="compositionally biased region" description="Basic and acidic residues" evidence="5">
    <location>
        <begin position="1"/>
        <end position="17"/>
    </location>
</feature>
<feature type="binding site" evidence="4">
    <location>
        <position position="153"/>
    </location>
    <ligand>
        <name>Ca(2+)</name>
        <dbReference type="ChEBI" id="CHEBI:29108"/>
        <label>1</label>
    </ligand>
</feature>
<feature type="binding site" evidence="4">
    <location>
        <position position="155"/>
    </location>
    <ligand>
        <name>Ca(2+)</name>
        <dbReference type="ChEBI" id="CHEBI:29108"/>
        <label>1</label>
    </ligand>
</feature>
<feature type="binding site" evidence="4">
    <location>
        <position position="157"/>
    </location>
    <ligand>
        <name>Ca(2+)</name>
        <dbReference type="ChEBI" id="CHEBI:29108"/>
        <label>1</label>
    </ligand>
</feature>
<feature type="binding site" evidence="4">
    <location>
        <position position="159"/>
    </location>
    <ligand>
        <name>Ca(2+)</name>
        <dbReference type="ChEBI" id="CHEBI:29108"/>
        <label>1</label>
    </ligand>
</feature>
<feature type="binding site" evidence="4">
    <location>
        <position position="164"/>
    </location>
    <ligand>
        <name>Ca(2+)</name>
        <dbReference type="ChEBI" id="CHEBI:29108"/>
        <label>1</label>
    </ligand>
</feature>
<feature type="binding site" evidence="4">
    <location>
        <position position="189"/>
    </location>
    <ligand>
        <name>Ca(2+)</name>
        <dbReference type="ChEBI" id="CHEBI:29108"/>
        <label>2</label>
    </ligand>
</feature>
<feature type="binding site" evidence="4">
    <location>
        <position position="191"/>
    </location>
    <ligand>
        <name>Ca(2+)</name>
        <dbReference type="ChEBI" id="CHEBI:29108"/>
        <label>2</label>
    </ligand>
</feature>
<feature type="binding site" evidence="4">
    <location>
        <position position="193"/>
    </location>
    <ligand>
        <name>Ca(2+)</name>
        <dbReference type="ChEBI" id="CHEBI:29108"/>
        <label>2</label>
    </ligand>
</feature>
<feature type="binding site" evidence="4">
    <location>
        <position position="195"/>
    </location>
    <ligand>
        <name>Ca(2+)</name>
        <dbReference type="ChEBI" id="CHEBI:29108"/>
        <label>2</label>
    </ligand>
</feature>
<feature type="binding site" evidence="4">
    <location>
        <position position="200"/>
    </location>
    <ligand>
        <name>Ca(2+)</name>
        <dbReference type="ChEBI" id="CHEBI:29108"/>
        <label>2</label>
    </ligand>
</feature>
<feature type="binding site" evidence="4">
    <location>
        <position position="237"/>
    </location>
    <ligand>
        <name>Ca(2+)</name>
        <dbReference type="ChEBI" id="CHEBI:29108"/>
        <label>3</label>
    </ligand>
</feature>
<feature type="binding site" evidence="4">
    <location>
        <position position="239"/>
    </location>
    <ligand>
        <name>Ca(2+)</name>
        <dbReference type="ChEBI" id="CHEBI:29108"/>
        <label>3</label>
    </ligand>
</feature>
<feature type="binding site" evidence="4">
    <location>
        <position position="241"/>
    </location>
    <ligand>
        <name>Ca(2+)</name>
        <dbReference type="ChEBI" id="CHEBI:29108"/>
        <label>3</label>
    </ligand>
</feature>
<feature type="binding site" evidence="4">
    <location>
        <position position="248"/>
    </location>
    <ligand>
        <name>Ca(2+)</name>
        <dbReference type="ChEBI" id="CHEBI:29108"/>
        <label>3</label>
    </ligand>
</feature>
<feature type="modified residue" description="Phosphoserine" evidence="3">
    <location>
        <position position="9"/>
    </location>
</feature>
<feature type="lipid moiety-binding region" description="S-palmitoyl cysteine" evidence="3">
    <location>
        <position position="45"/>
    </location>
</feature>
<feature type="lipid moiety-binding region" description="S-palmitoyl cysteine" evidence="3">
    <location>
        <position position="46"/>
    </location>
</feature>
<feature type="splice variant" id="VSP_015049" description="In isoform 8." evidence="26">
    <location>
        <begin position="1"/>
        <end position="93"/>
    </location>
</feature>
<feature type="splice variant" id="VSP_015050" description="In isoform 4." evidence="18 22 24">
    <original>MRGQGRKESLSDSRDLDGSYDQLTGHPPGPTKKALKQRFLKLLPCCGPQALPSVSETLAAPASLRPHRPRLLD</original>
    <variation>MNRCPRRCRSPLGQAARSLYQLVTGSLS</variation>
    <location>
        <begin position="1"/>
        <end position="73"/>
    </location>
</feature>
<feature type="splice variant" id="VSP_015051" description="In isoform 3, isoform 5, isoform 7 and isoform 9." evidence="17 19 20 21 22 23 24 25 26 27">
    <location>
        <begin position="25"/>
        <end position="74"/>
    </location>
</feature>
<feature type="splice variant" id="VSP_015052" description="In isoform 2." evidence="17 19 20 21 22 23 24 25">
    <original>TLAAPASLRPHRPRLLDPD</original>
    <variation>N</variation>
    <location>
        <begin position="57"/>
        <end position="75"/>
    </location>
</feature>
<feature type="splice variant" id="VSP_015053" description="In isoform 6." evidence="26">
    <original>T</original>
    <variation>IGRVFRFLGDSSLPSA</variation>
    <location>
        <position position="57"/>
    </location>
</feature>
<feature type="splice variant" id="VSP_015054" description="In isoform 8." evidence="26">
    <original>EQLQEQTKFTRKELQVLYRGFKNECPSGIVNEENFKQIYSQFFPQGDSSTYATFLFNAFDTNHDGSVSF</original>
    <variation>MWLSWTAWTMNLNCPPCVTGLRVWSSCRSKPNSRARSCRSCTGASRTNVPAELSMRRTSSRFTPSSFLK</variation>
    <location>
        <begin position="94"/>
        <end position="162"/>
    </location>
</feature>
<feature type="splice variant" id="VSP_015055" description="In isoform 7." evidence="25">
    <original>N</original>
    <variation>NPGALSFQ</variation>
    <location>
        <position position="116"/>
    </location>
</feature>
<feature type="splice variant" id="VSP_015056" description="In isoform 5." evidence="27">
    <location>
        <begin position="160"/>
        <end position="163"/>
    </location>
</feature>
<feature type="splice variant" id="VSP_015057" description="In isoform 9." evidence="26">
    <location>
        <begin position="163"/>
        <end position="198"/>
    </location>
</feature>
<feature type="splice variant" id="VSP_015058" description="In isoform 9." evidence="26">
    <original>DENIMRSMQLFDNVI</original>
    <variation>VQLPALYITLTWTQA</variation>
    <location>
        <begin position="256"/>
        <end position="270"/>
    </location>
</feature>
<feature type="sequence conflict" description="In Ref. 2; BAA96740." evidence="28" ref="2">
    <original>A</original>
    <variation>V</variation>
    <location>
        <position position="50"/>
    </location>
</feature>
<feature type="sequence conflict" description="In Ref. 2; BAA96740." evidence="28" ref="2">
    <original>L</original>
    <variation>P</variation>
    <location>
        <position position="71"/>
    </location>
</feature>
<feature type="sequence conflict" description="In Ref. 2; BAA96741." evidence="28" ref="2">
    <original>D</original>
    <variation>V</variation>
    <location>
        <position position="75"/>
    </location>
</feature>
<feature type="sequence conflict" description="In Ref. 10; BAB55052." evidence="28" ref="10">
    <original>S</original>
    <variation>R</variation>
    <location>
        <position position="76"/>
    </location>
</feature>
<feature type="sequence conflict" description="In Ref. 2; BAA96740." evidence="28" ref="2">
    <original>D</original>
    <variation>E</variation>
    <location>
        <position position="78"/>
    </location>
</feature>
<feature type="sequence conflict" description="In Ref. 8; CAB66656." evidence="28" ref="8">
    <original>L</original>
    <variation>S</variation>
    <location>
        <position position="83"/>
    </location>
</feature>
<feature type="sequence conflict" description="In Ref. 2; BAA96740/BAA96741." evidence="28" ref="2">
    <original>A</original>
    <variation>P</variation>
    <location>
        <position position="224"/>
    </location>
</feature>
<feature type="sequence conflict" description="In Ref. 9; AAP57633." evidence="28" ref="9">
    <original>N</original>
    <variation>S</variation>
    <location>
        <position position="239"/>
    </location>
</feature>
<feature type="sequence conflict" description="In Ref. 8; CAB66656." evidence="28" ref="8">
    <original>I</original>
    <variation>N</variation>
    <location>
        <position position="246"/>
    </location>
</feature>
<feature type="helix" evidence="31">
    <location>
        <begin position="93"/>
        <end position="99"/>
    </location>
</feature>
<feature type="helix" evidence="31">
    <location>
        <begin position="104"/>
        <end position="117"/>
    </location>
</feature>
<feature type="strand" evidence="31">
    <location>
        <begin position="121"/>
        <end position="124"/>
    </location>
</feature>
<feature type="helix" evidence="31">
    <location>
        <begin position="125"/>
        <end position="133"/>
    </location>
</feature>
<feature type="helix" evidence="31">
    <location>
        <begin position="142"/>
        <end position="152"/>
    </location>
</feature>
<feature type="strand" evidence="31">
    <location>
        <begin position="157"/>
        <end position="161"/>
    </location>
</feature>
<feature type="helix" evidence="31">
    <location>
        <begin position="162"/>
        <end position="174"/>
    </location>
</feature>
<feature type="helix" evidence="31">
    <location>
        <begin position="177"/>
        <end position="188"/>
    </location>
</feature>
<feature type="strand" evidence="31">
    <location>
        <begin position="193"/>
        <end position="196"/>
    </location>
</feature>
<feature type="helix" evidence="31">
    <location>
        <begin position="198"/>
        <end position="212"/>
    </location>
</feature>
<feature type="strand" evidence="31">
    <location>
        <begin position="214"/>
        <end position="218"/>
    </location>
</feature>
<feature type="helix" evidence="31">
    <location>
        <begin position="224"/>
        <end position="236"/>
    </location>
</feature>
<feature type="strand" evidence="31">
    <location>
        <begin position="241"/>
        <end position="245"/>
    </location>
</feature>
<feature type="helix" evidence="31">
    <location>
        <begin position="246"/>
        <end position="254"/>
    </location>
</feature>
<feature type="helix" evidence="31">
    <location>
        <begin position="257"/>
        <end position="269"/>
    </location>
</feature>
<evidence type="ECO:0000250" key="1">
    <source>
        <dbReference type="UniProtKB" id="Q8R426"/>
    </source>
</evidence>
<evidence type="ECO:0000250" key="2">
    <source>
        <dbReference type="UniProtKB" id="Q9JJ69"/>
    </source>
</evidence>
<evidence type="ECO:0000250" key="3">
    <source>
        <dbReference type="UniProtKB" id="Q9JM59"/>
    </source>
</evidence>
<evidence type="ECO:0000255" key="4">
    <source>
        <dbReference type="PROSITE-ProRule" id="PRU00448"/>
    </source>
</evidence>
<evidence type="ECO:0000256" key="5">
    <source>
        <dbReference type="SAM" id="MobiDB-lite"/>
    </source>
</evidence>
<evidence type="ECO:0000269" key="6">
    <source>
    </source>
</evidence>
<evidence type="ECO:0000269" key="7">
    <source>
    </source>
</evidence>
<evidence type="ECO:0000269" key="8">
    <source>
    </source>
</evidence>
<evidence type="ECO:0000269" key="9">
    <source>
    </source>
</evidence>
<evidence type="ECO:0000269" key="10">
    <source>
    </source>
</evidence>
<evidence type="ECO:0000269" key="11">
    <source>
    </source>
</evidence>
<evidence type="ECO:0000269" key="12">
    <source>
    </source>
</evidence>
<evidence type="ECO:0000269" key="13">
    <source>
    </source>
</evidence>
<evidence type="ECO:0000269" key="14">
    <source>
    </source>
</evidence>
<evidence type="ECO:0000269" key="15">
    <source>
    </source>
</evidence>
<evidence type="ECO:0000269" key="16">
    <source>
    </source>
</evidence>
<evidence type="ECO:0000303" key="17">
    <source>
    </source>
</evidence>
<evidence type="ECO:0000303" key="18">
    <source>
    </source>
</evidence>
<evidence type="ECO:0000303" key="19">
    <source>
    </source>
</evidence>
<evidence type="ECO:0000303" key="20">
    <source>
    </source>
</evidence>
<evidence type="ECO:0000303" key="21">
    <source>
    </source>
</evidence>
<evidence type="ECO:0000303" key="22">
    <source>
    </source>
</evidence>
<evidence type="ECO:0000303" key="23">
    <source>
    </source>
</evidence>
<evidence type="ECO:0000303" key="24">
    <source>
    </source>
</evidence>
<evidence type="ECO:0000303" key="25">
    <source ref="5"/>
</evidence>
<evidence type="ECO:0000303" key="26">
    <source ref="6"/>
</evidence>
<evidence type="ECO:0000303" key="27">
    <source ref="9"/>
</evidence>
<evidence type="ECO:0000305" key="28"/>
<evidence type="ECO:0000312" key="29">
    <source>
        <dbReference type="HGNC" id="HGNC:15522"/>
    </source>
</evidence>
<evidence type="ECO:0007744" key="30">
    <source>
        <dbReference type="PDB" id="7W6S"/>
    </source>
</evidence>
<evidence type="ECO:0007829" key="31">
    <source>
        <dbReference type="PDB" id="7UKH"/>
    </source>
</evidence>
<reference key="1">
    <citation type="journal article" date="2000" name="Nature">
        <title>Modulation of A-type potassium channels by a family of calcium sensors.</title>
        <authorList>
            <person name="An W.F."/>
            <person name="Bowlby M.R."/>
            <person name="Betty M."/>
            <person name="Cao J."/>
            <person name="Ling H.-P."/>
            <person name="Mendoza G."/>
            <person name="Hinson J.W."/>
            <person name="Mattsson K.I."/>
            <person name="Strassle B.W."/>
            <person name="Trimmer J.S."/>
            <person name="Rhodes K.J."/>
        </authorList>
    </citation>
    <scope>NUCLEOTIDE SEQUENCE [MRNA] (ISOFORM 2)</scope>
    <scope>FUNCTION</scope>
    <scope>INTERACTION WITH KCND2</scope>
</reference>
<reference key="2">
    <citation type="journal article" date="2001" name="Biochem. Biophys. Res. Commun.">
        <title>Molecular cloning and expression of the novel splice variants of K(+) channel-interacting protein 2.</title>
        <authorList>
            <person name="Ohya S."/>
            <person name="Morohashi Y."/>
            <person name="Muraki K."/>
            <person name="Tomita T."/>
            <person name="Watanabe M."/>
            <person name="Iwatsubo T."/>
            <person name="Imaizumi Y."/>
        </authorList>
    </citation>
    <scope>NUCLEOTIDE SEQUENCE [MRNA] (ISOFORMS 1 AND 3)</scope>
    <scope>TISSUE SPECIFICITY</scope>
    <source>
        <tissue>Umbilical vein endothelial cell</tissue>
    </source>
</reference>
<reference key="3">
    <citation type="journal article" date="2001" name="Cardiovasc. Res.">
        <title>hKChIP2 is a functional modifier of hKv4.3 potassium channels: cloning and expression of a short hKChIP2 splice variant.</title>
        <authorList>
            <person name="Decher N."/>
            <person name="Uyguner O."/>
            <person name="Scherer C.R."/>
            <person name="Karaman B."/>
            <person name="Yuksel-Apak M."/>
            <person name="Busch A.E."/>
            <person name="Steinmeyer K."/>
            <person name="Wollnik B."/>
        </authorList>
    </citation>
    <scope>NUCLEOTIDE SEQUENCE [GENOMIC DNA]</scope>
    <scope>NUCLEOTIDE SEQUENCE [MRNA] (ISOFORM 3)</scope>
    <scope>FUNCTION</scope>
    <scope>TISSUE SPECIFICITY</scope>
</reference>
<reference key="4">
    <citation type="journal article" date="2001" name="J. Biol. Chem.">
        <title>Conserved Kv4 N-terminal domain critical for effects of Kv channel-interacting protein 2.2 on channel expression and gating.</title>
        <authorList>
            <person name="Baehring R."/>
            <person name="Dannenberg J."/>
            <person name="Peters H.C."/>
            <person name="Leicher T."/>
            <person name="Pongs O."/>
            <person name="Isbrandt D."/>
        </authorList>
    </citation>
    <scope>NUCLEOTIDE SEQUENCE [MRNA] (ISOFORM 2)</scope>
    <scope>FUNCTION</scope>
    <scope>INTERACTION WITH KCND2</scope>
</reference>
<reference key="5">
    <citation type="submission" date="2000-08" db="EMBL/GenBank/DDBJ databases">
        <title>Modulatory elements of voltage gated potassium channels.</title>
        <authorList>
            <person name="Juang G.J."/>
            <person name="Tomaselli G.F."/>
        </authorList>
    </citation>
    <scope>NUCLEOTIDE SEQUENCE [MRNA] (ISOFORMS 3 AND 7)</scope>
    <source>
        <tissue>Heart</tissue>
    </source>
</reference>
<reference key="6">
    <citation type="submission" date="2001-03" db="EMBL/GenBank/DDBJ databases">
        <authorList>
            <person name="Isbrandt D."/>
            <person name="Pongs O."/>
        </authorList>
    </citation>
    <scope>NUCLEOTIDE SEQUENCE [MRNA] (ISOFORMS 1; 6; 8 AND 9)</scope>
</reference>
<reference key="7">
    <citation type="journal article" date="2005" name="Genomics">
        <title>Structure, alternative splicing, and expression of the human and mouse KCNIP gene family.</title>
        <authorList>
            <person name="Pruunsild P."/>
            <person name="Timmusk T."/>
        </authorList>
    </citation>
    <scope>NUCLEOTIDE SEQUENCE [MRNA] (ISOFORMS 1; 2 AND 4)</scope>
    <scope>ALTERNATIVE SPLICING</scope>
</reference>
<reference key="8">
    <citation type="journal article" date="2001" name="Genome Res.">
        <title>Towards a catalog of human genes and proteins: sequencing and analysis of 500 novel complete protein coding human cDNAs.</title>
        <authorList>
            <person name="Wiemann S."/>
            <person name="Weil B."/>
            <person name="Wellenreuther R."/>
            <person name="Gassenhuber J."/>
            <person name="Glassl S."/>
            <person name="Ansorge W."/>
            <person name="Boecher M."/>
            <person name="Bloecker H."/>
            <person name="Bauersachs S."/>
            <person name="Blum H."/>
            <person name="Lauber J."/>
            <person name="Duesterhoeft A."/>
            <person name="Beyer A."/>
            <person name="Koehrer K."/>
            <person name="Strack N."/>
            <person name="Mewes H.-W."/>
            <person name="Ottenwaelder B."/>
            <person name="Obermaier B."/>
            <person name="Tampe J."/>
            <person name="Heubner D."/>
            <person name="Wambutt R."/>
            <person name="Korn B."/>
            <person name="Klein M."/>
            <person name="Poustka A."/>
        </authorList>
    </citation>
    <scope>NUCLEOTIDE SEQUENCE [LARGE SCALE MRNA] (ISOFORM 4)</scope>
    <source>
        <tissue>Kidney</tissue>
    </source>
</reference>
<reference key="9">
    <citation type="submission" date="2003-05" db="EMBL/GenBank/DDBJ databases">
        <authorList>
            <person name="Li H."/>
            <person name="Zhong J."/>
            <person name="Zhou G."/>
            <person name="Shen C."/>
            <person name="Lin L."/>
            <person name="Yang S."/>
        </authorList>
    </citation>
    <scope>NUCLEOTIDE SEQUENCE [LARGE SCALE MRNA] (ISOFORM 5)</scope>
</reference>
<reference key="10">
    <citation type="journal article" date="2004" name="Nat. Genet.">
        <title>Complete sequencing and characterization of 21,243 full-length human cDNAs.</title>
        <authorList>
            <person name="Ota T."/>
            <person name="Suzuki Y."/>
            <person name="Nishikawa T."/>
            <person name="Otsuki T."/>
            <person name="Sugiyama T."/>
            <person name="Irie R."/>
            <person name="Wakamatsu A."/>
            <person name="Hayashi K."/>
            <person name="Sato H."/>
            <person name="Nagai K."/>
            <person name="Kimura K."/>
            <person name="Makita H."/>
            <person name="Sekine M."/>
            <person name="Obayashi M."/>
            <person name="Nishi T."/>
            <person name="Shibahara T."/>
            <person name="Tanaka T."/>
            <person name="Ishii S."/>
            <person name="Yamamoto J."/>
            <person name="Saito K."/>
            <person name="Kawai Y."/>
            <person name="Isono Y."/>
            <person name="Nakamura Y."/>
            <person name="Nagahari K."/>
            <person name="Murakami K."/>
            <person name="Yasuda T."/>
            <person name="Iwayanagi T."/>
            <person name="Wagatsuma M."/>
            <person name="Shiratori A."/>
            <person name="Sudo H."/>
            <person name="Hosoiri T."/>
            <person name="Kaku Y."/>
            <person name="Kodaira H."/>
            <person name="Kondo H."/>
            <person name="Sugawara M."/>
            <person name="Takahashi M."/>
            <person name="Kanda K."/>
            <person name="Yokoi T."/>
            <person name="Furuya T."/>
            <person name="Kikkawa E."/>
            <person name="Omura Y."/>
            <person name="Abe K."/>
            <person name="Kamihara K."/>
            <person name="Katsuta N."/>
            <person name="Sato K."/>
            <person name="Tanikawa M."/>
            <person name="Yamazaki M."/>
            <person name="Ninomiya K."/>
            <person name="Ishibashi T."/>
            <person name="Yamashita H."/>
            <person name="Murakawa K."/>
            <person name="Fujimori K."/>
            <person name="Tanai H."/>
            <person name="Kimata M."/>
            <person name="Watanabe M."/>
            <person name="Hiraoka S."/>
            <person name="Chiba Y."/>
            <person name="Ishida S."/>
            <person name="Ono Y."/>
            <person name="Takiguchi S."/>
            <person name="Watanabe S."/>
            <person name="Yosida M."/>
            <person name="Hotuta T."/>
            <person name="Kusano J."/>
            <person name="Kanehori K."/>
            <person name="Takahashi-Fujii A."/>
            <person name="Hara H."/>
            <person name="Tanase T.-O."/>
            <person name="Nomura Y."/>
            <person name="Togiya S."/>
            <person name="Komai F."/>
            <person name="Hara R."/>
            <person name="Takeuchi K."/>
            <person name="Arita M."/>
            <person name="Imose N."/>
            <person name="Musashino K."/>
            <person name="Yuuki H."/>
            <person name="Oshima A."/>
            <person name="Sasaki N."/>
            <person name="Aotsuka S."/>
            <person name="Yoshikawa Y."/>
            <person name="Matsunawa H."/>
            <person name="Ichihara T."/>
            <person name="Shiohata N."/>
            <person name="Sano S."/>
            <person name="Moriya S."/>
            <person name="Momiyama H."/>
            <person name="Satoh N."/>
            <person name="Takami S."/>
            <person name="Terashima Y."/>
            <person name="Suzuki O."/>
            <person name="Nakagawa S."/>
            <person name="Senoh A."/>
            <person name="Mizoguchi H."/>
            <person name="Goto Y."/>
            <person name="Shimizu F."/>
            <person name="Wakebe H."/>
            <person name="Hishigaki H."/>
            <person name="Watanabe T."/>
            <person name="Sugiyama A."/>
            <person name="Takemoto M."/>
            <person name="Kawakami B."/>
            <person name="Yamazaki M."/>
            <person name="Watanabe K."/>
            <person name="Kumagai A."/>
            <person name="Itakura S."/>
            <person name="Fukuzumi Y."/>
            <person name="Fujimori Y."/>
            <person name="Komiyama M."/>
            <person name="Tashiro H."/>
            <person name="Tanigami A."/>
            <person name="Fujiwara T."/>
            <person name="Ono T."/>
            <person name="Yamada K."/>
            <person name="Fujii Y."/>
            <person name="Ozaki K."/>
            <person name="Hirao M."/>
            <person name="Ohmori Y."/>
            <person name="Kawabata A."/>
            <person name="Hikiji T."/>
            <person name="Kobatake N."/>
            <person name="Inagaki H."/>
            <person name="Ikema Y."/>
            <person name="Okamoto S."/>
            <person name="Okitani R."/>
            <person name="Kawakami T."/>
            <person name="Noguchi S."/>
            <person name="Itoh T."/>
            <person name="Shigeta K."/>
            <person name="Senba T."/>
            <person name="Matsumura K."/>
            <person name="Nakajima Y."/>
            <person name="Mizuno T."/>
            <person name="Morinaga M."/>
            <person name="Sasaki M."/>
            <person name="Togashi T."/>
            <person name="Oyama M."/>
            <person name="Hata H."/>
            <person name="Watanabe M."/>
            <person name="Komatsu T."/>
            <person name="Mizushima-Sugano J."/>
            <person name="Satoh T."/>
            <person name="Shirai Y."/>
            <person name="Takahashi Y."/>
            <person name="Nakagawa K."/>
            <person name="Okumura K."/>
            <person name="Nagase T."/>
            <person name="Nomura N."/>
            <person name="Kikuchi H."/>
            <person name="Masuho Y."/>
            <person name="Yamashita R."/>
            <person name="Nakai K."/>
            <person name="Yada T."/>
            <person name="Nakamura Y."/>
            <person name="Ohara O."/>
            <person name="Isogai T."/>
            <person name="Sugano S."/>
        </authorList>
    </citation>
    <scope>NUCLEOTIDE SEQUENCE [LARGE SCALE MRNA] (ISOFORMS 2 AND 4)</scope>
    <source>
        <tissue>Brain</tissue>
        <tissue>Embryo</tissue>
    </source>
</reference>
<reference key="11">
    <citation type="journal article" date="2004" name="Nature">
        <title>The DNA sequence and comparative analysis of human chromosome 10.</title>
        <authorList>
            <person name="Deloukas P."/>
            <person name="Earthrowl M.E."/>
            <person name="Grafham D.V."/>
            <person name="Rubenfield M."/>
            <person name="French L."/>
            <person name="Steward C.A."/>
            <person name="Sims S.K."/>
            <person name="Jones M.C."/>
            <person name="Searle S."/>
            <person name="Scott C."/>
            <person name="Howe K."/>
            <person name="Hunt S.E."/>
            <person name="Andrews T.D."/>
            <person name="Gilbert J.G.R."/>
            <person name="Swarbreck D."/>
            <person name="Ashurst J.L."/>
            <person name="Taylor A."/>
            <person name="Battles J."/>
            <person name="Bird C.P."/>
            <person name="Ainscough R."/>
            <person name="Almeida J.P."/>
            <person name="Ashwell R.I.S."/>
            <person name="Ambrose K.D."/>
            <person name="Babbage A.K."/>
            <person name="Bagguley C.L."/>
            <person name="Bailey J."/>
            <person name="Banerjee R."/>
            <person name="Bates K."/>
            <person name="Beasley H."/>
            <person name="Bray-Allen S."/>
            <person name="Brown A.J."/>
            <person name="Brown J.Y."/>
            <person name="Burford D.C."/>
            <person name="Burrill W."/>
            <person name="Burton J."/>
            <person name="Cahill P."/>
            <person name="Camire D."/>
            <person name="Carter N.P."/>
            <person name="Chapman J.C."/>
            <person name="Clark S.Y."/>
            <person name="Clarke G."/>
            <person name="Clee C.M."/>
            <person name="Clegg S."/>
            <person name="Corby N."/>
            <person name="Coulson A."/>
            <person name="Dhami P."/>
            <person name="Dutta I."/>
            <person name="Dunn M."/>
            <person name="Faulkner L."/>
            <person name="Frankish A."/>
            <person name="Frankland J.A."/>
            <person name="Garner P."/>
            <person name="Garnett J."/>
            <person name="Gribble S."/>
            <person name="Griffiths C."/>
            <person name="Grocock R."/>
            <person name="Gustafson E."/>
            <person name="Hammond S."/>
            <person name="Harley J.L."/>
            <person name="Hart E."/>
            <person name="Heath P.D."/>
            <person name="Ho T.P."/>
            <person name="Hopkins B."/>
            <person name="Horne J."/>
            <person name="Howden P.J."/>
            <person name="Huckle E."/>
            <person name="Hynds C."/>
            <person name="Johnson C."/>
            <person name="Johnson D."/>
            <person name="Kana A."/>
            <person name="Kay M."/>
            <person name="Kimberley A.M."/>
            <person name="Kershaw J.K."/>
            <person name="Kokkinaki M."/>
            <person name="Laird G.K."/>
            <person name="Lawlor S."/>
            <person name="Lee H.M."/>
            <person name="Leongamornlert D.A."/>
            <person name="Laird G."/>
            <person name="Lloyd C."/>
            <person name="Lloyd D.M."/>
            <person name="Loveland J."/>
            <person name="Lovell J."/>
            <person name="McLaren S."/>
            <person name="McLay K.E."/>
            <person name="McMurray A."/>
            <person name="Mashreghi-Mohammadi M."/>
            <person name="Matthews L."/>
            <person name="Milne S."/>
            <person name="Nickerson T."/>
            <person name="Nguyen M."/>
            <person name="Overton-Larty E."/>
            <person name="Palmer S.A."/>
            <person name="Pearce A.V."/>
            <person name="Peck A.I."/>
            <person name="Pelan S."/>
            <person name="Phillimore B."/>
            <person name="Porter K."/>
            <person name="Rice C.M."/>
            <person name="Rogosin A."/>
            <person name="Ross M.T."/>
            <person name="Sarafidou T."/>
            <person name="Sehra H.K."/>
            <person name="Shownkeen R."/>
            <person name="Skuce C.D."/>
            <person name="Smith M."/>
            <person name="Standring L."/>
            <person name="Sycamore N."/>
            <person name="Tester J."/>
            <person name="Thorpe A."/>
            <person name="Torcasso W."/>
            <person name="Tracey A."/>
            <person name="Tromans A."/>
            <person name="Tsolas J."/>
            <person name="Wall M."/>
            <person name="Walsh J."/>
            <person name="Wang H."/>
            <person name="Weinstock K."/>
            <person name="West A.P."/>
            <person name="Willey D.L."/>
            <person name="Whitehead S.L."/>
            <person name="Wilming L."/>
            <person name="Wray P.W."/>
            <person name="Young L."/>
            <person name="Chen Y."/>
            <person name="Lovering R.C."/>
            <person name="Moschonas N.K."/>
            <person name="Siebert R."/>
            <person name="Fechtel K."/>
            <person name="Bentley D."/>
            <person name="Durbin R.M."/>
            <person name="Hubbard T."/>
            <person name="Doucette-Stamm L."/>
            <person name="Beck S."/>
            <person name="Smith D.R."/>
            <person name="Rogers J."/>
        </authorList>
    </citation>
    <scope>NUCLEOTIDE SEQUENCE [LARGE SCALE GENOMIC DNA]</scope>
</reference>
<reference key="12">
    <citation type="submission" date="2005-09" db="EMBL/GenBank/DDBJ databases">
        <authorList>
            <person name="Mural R.J."/>
            <person name="Istrail S."/>
            <person name="Sutton G."/>
            <person name="Florea L."/>
            <person name="Halpern A.L."/>
            <person name="Mobarry C.M."/>
            <person name="Lippert R."/>
            <person name="Walenz B."/>
            <person name="Shatkay H."/>
            <person name="Dew I."/>
            <person name="Miller J.R."/>
            <person name="Flanigan M.J."/>
            <person name="Edwards N.J."/>
            <person name="Bolanos R."/>
            <person name="Fasulo D."/>
            <person name="Halldorsson B.V."/>
            <person name="Hannenhalli S."/>
            <person name="Turner R."/>
            <person name="Yooseph S."/>
            <person name="Lu F."/>
            <person name="Nusskern D.R."/>
            <person name="Shue B.C."/>
            <person name="Zheng X.H."/>
            <person name="Zhong F."/>
            <person name="Delcher A.L."/>
            <person name="Huson D.H."/>
            <person name="Kravitz S.A."/>
            <person name="Mouchard L."/>
            <person name="Reinert K."/>
            <person name="Remington K.A."/>
            <person name="Clark A.G."/>
            <person name="Waterman M.S."/>
            <person name="Eichler E.E."/>
            <person name="Adams M.D."/>
            <person name="Hunkapiller M.W."/>
            <person name="Myers E.W."/>
            <person name="Venter J.C."/>
        </authorList>
    </citation>
    <scope>NUCLEOTIDE SEQUENCE [LARGE SCALE GENOMIC DNA]</scope>
</reference>
<reference key="13">
    <citation type="journal article" date="2004" name="Genome Res.">
        <title>The status, quality, and expansion of the NIH full-length cDNA project: the Mammalian Gene Collection (MGC).</title>
        <authorList>
            <consortium name="The MGC Project Team"/>
        </authorList>
    </citation>
    <scope>NUCLEOTIDE SEQUENCE [LARGE SCALE MRNA] (ISOFORM 2)</scope>
    <source>
        <tissue>Brain</tissue>
    </source>
</reference>
<reference key="14">
    <citation type="submission" date="2000-03" db="EMBL/GenBank/DDBJ databases">
        <title>Full-length of some muscular transcripts, Telethon (Italy) project B41.</title>
        <authorList>
            <person name="Ievolella C."/>
            <person name="Trevisan S."/>
            <person name="Pacchioni B."/>
            <person name="Stanchi F."/>
            <person name="Frigimelica E."/>
            <person name="Scannapieco P."/>
            <person name="Corso V."/>
            <person name="Biasio B."/>
            <person name="Lanfranchi G."/>
        </authorList>
    </citation>
    <scope>NUCLEOTIDE SEQUENCE [LARGE SCALE MRNA] OF 213-270</scope>
    <source>
        <tissue>Skeletal muscle</tissue>
    </source>
</reference>
<reference key="15">
    <citation type="journal article" date="2002" name="FEBS Lett.">
        <title>Modulation of Kv4.3 current by accessory subunits.</title>
        <authorList>
            <person name="Deschenes I."/>
            <person name="Tomaselli G.F."/>
        </authorList>
    </citation>
    <scope>FUNCTION</scope>
    <scope>INTERACTION WITH KCND3</scope>
</reference>
<reference key="16">
    <citation type="journal article" date="2003" name="J. Biol. Chem.">
        <title>A fundamental role for KChIPs in determining the molecular properties and trafficking of Kv4.2 potassium channels.</title>
        <authorList>
            <person name="Shibata R."/>
            <person name="Misonou H."/>
            <person name="Campomanes C.R."/>
            <person name="Anderson A.E."/>
            <person name="Schrader L.A."/>
            <person name="Doliveira L.C."/>
            <person name="Carroll K.I."/>
            <person name="Sweatt J.D."/>
            <person name="Rhodes K.J."/>
            <person name="Trimmer J.S."/>
        </authorList>
    </citation>
    <scope>FUNCTION</scope>
</reference>
<reference key="17">
    <citation type="journal article" date="2004" name="Biochem. Biophys. Res. Commun.">
        <title>Protein-protein interactions of KChIP proteins and Kv4.2.</title>
        <authorList>
            <person name="Lin Y.-L."/>
            <person name="Chen C.Y."/>
            <person name="Cheng C.P."/>
            <person name="Chang L.S."/>
        </authorList>
    </citation>
    <scope>INTERACTION WITH KCNIP1 AND KCDN2</scope>
    <scope>HOMOOLIGOMERIZATION</scope>
</reference>
<reference key="18">
    <citation type="journal article" date="2004" name="J. Biol. Chem.">
        <title>Ito channels are octameric complexes with four subunits of each Kv4.2 and K+ channel-interacting protein 2.</title>
        <authorList>
            <person name="Kim L.A."/>
            <person name="Furst J."/>
            <person name="Butler M.H."/>
            <person name="Xu S."/>
            <person name="Grigorieff N."/>
            <person name="Goldstein S.A."/>
        </authorList>
    </citation>
    <scope>FUNCTION</scope>
    <scope>COMPOSITION OF THE KCND2-KCNIP2 COMPLEX</scope>
    <scope>SUBUNIT</scope>
</reference>
<reference key="19">
    <citation type="journal article" date="2004" name="J. Neurosci.">
        <title>KChIPs and Kv4 alpha subunits as integral components of A-type potassium channels in mammalian brain.</title>
        <authorList>
            <person name="Rhodes K.J."/>
            <person name="Carroll K.I."/>
            <person name="Sung M.A."/>
            <person name="Doliveira L.C."/>
            <person name="Monaghan M.M."/>
            <person name="Burke S.L."/>
            <person name="Strassle B.W."/>
            <person name="Buchwalder L."/>
            <person name="Menegola M."/>
            <person name="Cao J."/>
            <person name="An W.F."/>
            <person name="Trimmer J.S."/>
        </authorList>
    </citation>
    <scope>TISSUE SPECIFICITY</scope>
    <scope>INTERACTION WITH KCND2</scope>
</reference>
<reference key="20">
    <citation type="journal article" date="2004" name="Neuron">
        <title>Three-dimensional structure of I(to); Kv4.2-KChIP2 ion channels by electron microscopy at 21 Angstrom resolution.</title>
        <authorList>
            <person name="Kim L.A."/>
            <person name="Furst J."/>
            <person name="Gutierrez D."/>
            <person name="Butler M.H."/>
            <person name="Xu S."/>
            <person name="Goldstein S.A."/>
            <person name="Grigorieff N."/>
        </authorList>
    </citation>
    <scope>STRUCTURE BY ELECTRON MICROSCOPY (21 ANGSTROMS) OF THE KCND2-KCNIP2 COMPLEX</scope>
    <scope>SUBUNIT</scope>
</reference>
<reference evidence="30" key="21">
    <citation type="journal article" date="2022" name="Cell Res.">
        <title>Structural basis for the gating modulation of Kv4.3 by auxiliary subunits.</title>
        <authorList>
            <person name="Ma D."/>
            <person name="Zhao C."/>
            <person name="Wang X."/>
            <person name="Li X."/>
            <person name="Zha Y."/>
            <person name="Zhang Y."/>
            <person name="Fu G."/>
            <person name="Liang P."/>
            <person name="Guo J."/>
            <person name="Lai D."/>
        </authorList>
    </citation>
    <scope>STRUCTURE BY ELECTRON MICROSCOPY (2.80 ANGSTROMS) IN COMPLEX WITH KCND3</scope>
    <scope>FUNCTION</scope>
    <scope>SUBUNIT</scope>
</reference>
<gene>
    <name evidence="29" type="primary">KCNIP2</name>
    <name evidence="21" type="synonym">KCHIP2</name>
</gene>
<accession>Q9NS61</accession>
<accession>A6NJE5</accession>
<accession>A8MQ75</accession>
<accession>Q3YAC6</accession>
<accession>Q3YAC8</accession>
<accession>Q3YAC9</accession>
<accession>Q7Z6F1</accession>
<accession>Q96K86</accession>
<accession>Q96T41</accession>
<accession>Q96T42</accession>
<accession>Q96T43</accession>
<accession>Q96T44</accession>
<accession>Q9H0N4</accession>
<accession>Q9HD10</accession>
<accession>Q9HD11</accession>
<accession>Q9NS60</accession>
<accession>Q9NY10</accession>
<accession>Q9NZI1</accession>